<gene>
    <name evidence="1" type="primary">kdsA</name>
    <name type="ordered locus">SBO_1852</name>
</gene>
<keyword id="KW-0963">Cytoplasm</keyword>
<keyword id="KW-0448">Lipopolysaccharide biosynthesis</keyword>
<keyword id="KW-0808">Transferase</keyword>
<name>KDSA_SHIBS</name>
<reference key="1">
    <citation type="journal article" date="2005" name="Nucleic Acids Res.">
        <title>Genome dynamics and diversity of Shigella species, the etiologic agents of bacillary dysentery.</title>
        <authorList>
            <person name="Yang F."/>
            <person name="Yang J."/>
            <person name="Zhang X."/>
            <person name="Chen L."/>
            <person name="Jiang Y."/>
            <person name="Yan Y."/>
            <person name="Tang X."/>
            <person name="Wang J."/>
            <person name="Xiong Z."/>
            <person name="Dong J."/>
            <person name="Xue Y."/>
            <person name="Zhu Y."/>
            <person name="Xu X."/>
            <person name="Sun L."/>
            <person name="Chen S."/>
            <person name="Nie H."/>
            <person name="Peng J."/>
            <person name="Xu J."/>
            <person name="Wang Y."/>
            <person name="Yuan Z."/>
            <person name="Wen Y."/>
            <person name="Yao Z."/>
            <person name="Shen Y."/>
            <person name="Qiang B."/>
            <person name="Hou Y."/>
            <person name="Yu J."/>
            <person name="Jin Q."/>
        </authorList>
    </citation>
    <scope>NUCLEOTIDE SEQUENCE [LARGE SCALE GENOMIC DNA]</scope>
    <source>
        <strain>Sb227</strain>
    </source>
</reference>
<comment type="catalytic activity">
    <reaction evidence="1">
        <text>D-arabinose 5-phosphate + phosphoenolpyruvate + H2O = 3-deoxy-alpha-D-manno-2-octulosonate-8-phosphate + phosphate</text>
        <dbReference type="Rhea" id="RHEA:14053"/>
        <dbReference type="ChEBI" id="CHEBI:15377"/>
        <dbReference type="ChEBI" id="CHEBI:43474"/>
        <dbReference type="ChEBI" id="CHEBI:57693"/>
        <dbReference type="ChEBI" id="CHEBI:58702"/>
        <dbReference type="ChEBI" id="CHEBI:85985"/>
        <dbReference type="EC" id="2.5.1.55"/>
    </reaction>
</comment>
<comment type="pathway">
    <text evidence="1">Carbohydrate biosynthesis; 3-deoxy-D-manno-octulosonate biosynthesis; 3-deoxy-D-manno-octulosonate from D-ribulose 5-phosphate: step 2/3.</text>
</comment>
<comment type="pathway">
    <text evidence="1">Bacterial outer membrane biogenesis; lipopolysaccharide biosynthesis.</text>
</comment>
<comment type="subcellular location">
    <subcellularLocation>
        <location evidence="1">Cytoplasm</location>
    </subcellularLocation>
</comment>
<comment type="similarity">
    <text evidence="1">Belongs to the KdsA family.</text>
</comment>
<feature type="chain" id="PRO_0000304491" description="2-dehydro-3-deoxyphosphooctonate aldolase">
    <location>
        <begin position="1"/>
        <end position="284"/>
    </location>
</feature>
<evidence type="ECO:0000255" key="1">
    <source>
        <dbReference type="HAMAP-Rule" id="MF_00056"/>
    </source>
</evidence>
<dbReference type="EC" id="2.5.1.55" evidence="1"/>
<dbReference type="EMBL" id="CP000036">
    <property type="protein sequence ID" value="ABB66450.1"/>
    <property type="molecule type" value="Genomic_DNA"/>
</dbReference>
<dbReference type="RefSeq" id="WP_000811065.1">
    <property type="nucleotide sequence ID" value="NC_007613.1"/>
</dbReference>
<dbReference type="SMR" id="Q31ZQ8"/>
<dbReference type="GeneID" id="75203328"/>
<dbReference type="KEGG" id="sbo:SBO_1852"/>
<dbReference type="HOGENOM" id="CLU_036666_0_0_6"/>
<dbReference type="UniPathway" id="UPA00030"/>
<dbReference type="UniPathway" id="UPA00357">
    <property type="reaction ID" value="UER00474"/>
</dbReference>
<dbReference type="Proteomes" id="UP000007067">
    <property type="component" value="Chromosome"/>
</dbReference>
<dbReference type="GO" id="GO:0005737">
    <property type="term" value="C:cytoplasm"/>
    <property type="evidence" value="ECO:0007669"/>
    <property type="project" value="UniProtKB-SubCell"/>
</dbReference>
<dbReference type="GO" id="GO:0008676">
    <property type="term" value="F:3-deoxy-8-phosphooctulonate synthase activity"/>
    <property type="evidence" value="ECO:0007669"/>
    <property type="project" value="UniProtKB-UniRule"/>
</dbReference>
<dbReference type="GO" id="GO:0019294">
    <property type="term" value="P:keto-3-deoxy-D-manno-octulosonic acid biosynthetic process"/>
    <property type="evidence" value="ECO:0007669"/>
    <property type="project" value="UniProtKB-UniRule"/>
</dbReference>
<dbReference type="FunFam" id="3.20.20.70:FF:000058">
    <property type="entry name" value="2-dehydro-3-deoxyphosphooctonate aldolase"/>
    <property type="match status" value="1"/>
</dbReference>
<dbReference type="Gene3D" id="3.20.20.70">
    <property type="entry name" value="Aldolase class I"/>
    <property type="match status" value="1"/>
</dbReference>
<dbReference type="HAMAP" id="MF_00056">
    <property type="entry name" value="KDO8P_synth"/>
    <property type="match status" value="1"/>
</dbReference>
<dbReference type="InterPro" id="IPR013785">
    <property type="entry name" value="Aldolase_TIM"/>
</dbReference>
<dbReference type="InterPro" id="IPR006218">
    <property type="entry name" value="DAHP1/KDSA"/>
</dbReference>
<dbReference type="InterPro" id="IPR006269">
    <property type="entry name" value="KDO8P_synthase"/>
</dbReference>
<dbReference type="NCBIfam" id="TIGR01362">
    <property type="entry name" value="KDO8P_synth"/>
    <property type="match status" value="1"/>
</dbReference>
<dbReference type="NCBIfam" id="NF003543">
    <property type="entry name" value="PRK05198.1"/>
    <property type="match status" value="1"/>
</dbReference>
<dbReference type="NCBIfam" id="NF009109">
    <property type="entry name" value="PRK12457.1"/>
    <property type="match status" value="1"/>
</dbReference>
<dbReference type="PANTHER" id="PTHR21057">
    <property type="entry name" value="PHOSPHO-2-DEHYDRO-3-DEOXYHEPTONATE ALDOLASE"/>
    <property type="match status" value="1"/>
</dbReference>
<dbReference type="Pfam" id="PF00793">
    <property type="entry name" value="DAHP_synth_1"/>
    <property type="match status" value="1"/>
</dbReference>
<dbReference type="SUPFAM" id="SSF51569">
    <property type="entry name" value="Aldolase"/>
    <property type="match status" value="1"/>
</dbReference>
<accession>Q31ZQ8</accession>
<proteinExistence type="inferred from homology"/>
<protein>
    <recommendedName>
        <fullName evidence="1">2-dehydro-3-deoxyphosphooctonate aldolase</fullName>
        <ecNumber evidence="1">2.5.1.55</ecNumber>
    </recommendedName>
    <alternativeName>
        <fullName evidence="1">3-deoxy-D-manno-octulosonic acid 8-phosphate synthase</fullName>
    </alternativeName>
    <alternativeName>
        <fullName evidence="1">KDO-8-phosphate synthase</fullName>
        <shortName evidence="1">KDO 8-P synthase</shortName>
        <shortName evidence="1">KDOPS</shortName>
    </alternativeName>
    <alternativeName>
        <fullName evidence="1">Phospho-2-dehydro-3-deoxyoctonate aldolase</fullName>
    </alternativeName>
</protein>
<organism>
    <name type="scientific">Shigella boydii serotype 4 (strain Sb227)</name>
    <dbReference type="NCBI Taxonomy" id="300268"/>
    <lineage>
        <taxon>Bacteria</taxon>
        <taxon>Pseudomonadati</taxon>
        <taxon>Pseudomonadota</taxon>
        <taxon>Gammaproteobacteria</taxon>
        <taxon>Enterobacterales</taxon>
        <taxon>Enterobacteriaceae</taxon>
        <taxon>Shigella</taxon>
    </lineage>
</organism>
<sequence>MKQKVVSIGDINVANDLPFVLFGGMNVLESRDLAMRICEHYVTVTQKLGIPYVFKASFDKANRSSIHSYRGPGLEEGMKIFQELKQTFGVKIITDVHEPSQAQPVADVVDVIQLPAFLARQTDLVEAMAKTGAVINVKKPQFVSPGQMGNIVDKFKEGGNEKVILCDRGANFGYDNLVVDMLGFSIMKKVSGNSPVIFDVTHALQCRDPFGAASGGRRAQVAELARAGMAVGLAGLFIEAHPDPEHAKCDGPSALPLAKLEPFLKQMKAIDDLVKGFEELDTSK</sequence>